<name>RL9_TREPS</name>
<accession>B2S208</accession>
<dbReference type="EMBL" id="CP000805">
    <property type="protein sequence ID" value="ACD70487.1"/>
    <property type="molecule type" value="Genomic_DNA"/>
</dbReference>
<dbReference type="RefSeq" id="WP_010881509.1">
    <property type="nucleotide sequence ID" value="NC_021508.1"/>
</dbReference>
<dbReference type="SMR" id="B2S208"/>
<dbReference type="GeneID" id="93875855"/>
<dbReference type="KEGG" id="tpp:TPASS_0060"/>
<dbReference type="PATRIC" id="fig|455434.6.peg.58"/>
<dbReference type="Proteomes" id="UP000001202">
    <property type="component" value="Chromosome"/>
</dbReference>
<dbReference type="GO" id="GO:1990904">
    <property type="term" value="C:ribonucleoprotein complex"/>
    <property type="evidence" value="ECO:0007669"/>
    <property type="project" value="UniProtKB-KW"/>
</dbReference>
<dbReference type="GO" id="GO:0005840">
    <property type="term" value="C:ribosome"/>
    <property type="evidence" value="ECO:0007669"/>
    <property type="project" value="UniProtKB-KW"/>
</dbReference>
<dbReference type="GO" id="GO:0019843">
    <property type="term" value="F:rRNA binding"/>
    <property type="evidence" value="ECO:0007669"/>
    <property type="project" value="UniProtKB-UniRule"/>
</dbReference>
<dbReference type="GO" id="GO:0003735">
    <property type="term" value="F:structural constituent of ribosome"/>
    <property type="evidence" value="ECO:0007669"/>
    <property type="project" value="InterPro"/>
</dbReference>
<dbReference type="GO" id="GO:0006412">
    <property type="term" value="P:translation"/>
    <property type="evidence" value="ECO:0007669"/>
    <property type="project" value="UniProtKB-UniRule"/>
</dbReference>
<dbReference type="Gene3D" id="3.10.430.100">
    <property type="entry name" value="Ribosomal protein L9, C-terminal domain"/>
    <property type="match status" value="1"/>
</dbReference>
<dbReference type="Gene3D" id="3.40.5.10">
    <property type="entry name" value="Ribosomal protein L9, N-terminal domain"/>
    <property type="match status" value="1"/>
</dbReference>
<dbReference type="HAMAP" id="MF_00503">
    <property type="entry name" value="Ribosomal_bL9"/>
    <property type="match status" value="1"/>
</dbReference>
<dbReference type="InterPro" id="IPR000244">
    <property type="entry name" value="Ribosomal_bL9"/>
</dbReference>
<dbReference type="InterPro" id="IPR009027">
    <property type="entry name" value="Ribosomal_bL9/RNase_H1_N"/>
</dbReference>
<dbReference type="InterPro" id="IPR020594">
    <property type="entry name" value="Ribosomal_bL9_bac/chp"/>
</dbReference>
<dbReference type="InterPro" id="IPR020069">
    <property type="entry name" value="Ribosomal_bL9_C"/>
</dbReference>
<dbReference type="InterPro" id="IPR036791">
    <property type="entry name" value="Ribosomal_bL9_C_sf"/>
</dbReference>
<dbReference type="InterPro" id="IPR020070">
    <property type="entry name" value="Ribosomal_bL9_N"/>
</dbReference>
<dbReference type="InterPro" id="IPR036935">
    <property type="entry name" value="Ribosomal_bL9_N_sf"/>
</dbReference>
<dbReference type="NCBIfam" id="TIGR00158">
    <property type="entry name" value="L9"/>
    <property type="match status" value="1"/>
</dbReference>
<dbReference type="PANTHER" id="PTHR21368">
    <property type="entry name" value="50S RIBOSOMAL PROTEIN L9"/>
    <property type="match status" value="1"/>
</dbReference>
<dbReference type="Pfam" id="PF03948">
    <property type="entry name" value="Ribosomal_L9_C"/>
    <property type="match status" value="1"/>
</dbReference>
<dbReference type="Pfam" id="PF01281">
    <property type="entry name" value="Ribosomal_L9_N"/>
    <property type="match status" value="1"/>
</dbReference>
<dbReference type="SUPFAM" id="SSF55658">
    <property type="entry name" value="L9 N-domain-like"/>
    <property type="match status" value="1"/>
</dbReference>
<dbReference type="SUPFAM" id="SSF55653">
    <property type="entry name" value="Ribosomal protein L9 C-domain"/>
    <property type="match status" value="1"/>
</dbReference>
<dbReference type="PROSITE" id="PS00651">
    <property type="entry name" value="RIBOSOMAL_L9"/>
    <property type="match status" value="1"/>
</dbReference>
<gene>
    <name evidence="1" type="primary">rplI</name>
    <name type="ordered locus">TPASS_0060</name>
</gene>
<evidence type="ECO:0000255" key="1">
    <source>
        <dbReference type="HAMAP-Rule" id="MF_00503"/>
    </source>
</evidence>
<evidence type="ECO:0000305" key="2"/>
<feature type="chain" id="PRO_1000126989" description="Large ribosomal subunit protein bL9">
    <location>
        <begin position="1"/>
        <end position="156"/>
    </location>
</feature>
<organism>
    <name type="scientific">Treponema pallidum subsp. pallidum (strain SS14)</name>
    <dbReference type="NCBI Taxonomy" id="455434"/>
    <lineage>
        <taxon>Bacteria</taxon>
        <taxon>Pseudomonadati</taxon>
        <taxon>Spirochaetota</taxon>
        <taxon>Spirochaetia</taxon>
        <taxon>Spirochaetales</taxon>
        <taxon>Treponemataceae</taxon>
        <taxon>Treponema</taxon>
    </lineage>
</organism>
<protein>
    <recommendedName>
        <fullName evidence="1">Large ribosomal subunit protein bL9</fullName>
    </recommendedName>
    <alternativeName>
        <fullName evidence="2">50S ribosomal protein L9</fullName>
    </alternativeName>
</protein>
<proteinExistence type="inferred from homology"/>
<sequence length="156" mass="17504">MKIILNQDVKILGEEGDVKEVAAGYFRNYLYPRNLAVPHNRFTVARFKQRQQDIEMRKSLKRQDAANLKARLEAQPVVIAMPAGTNGKLYGAVTSHTVAEQLACMGFEVERKRVEVPGLTLKCVGNYHVTIRLYEEICAVVPVTIKNQSEADSVSE</sequence>
<reference key="1">
    <citation type="journal article" date="2008" name="BMC Microbiol.">
        <title>Complete genome sequence of Treponema pallidum ssp. pallidum strain SS14 determined with oligonucleotide arrays.</title>
        <authorList>
            <person name="Matejkova P."/>
            <person name="Strouhal M."/>
            <person name="Smajs D."/>
            <person name="Norris S.J."/>
            <person name="Palzkill T."/>
            <person name="Petrosino J.F."/>
            <person name="Sodergren E."/>
            <person name="Norton J.E."/>
            <person name="Singh J."/>
            <person name="Richmond T.A."/>
            <person name="Molla M.N."/>
            <person name="Albert T.J."/>
            <person name="Weinstock G.M."/>
        </authorList>
    </citation>
    <scope>NUCLEOTIDE SEQUENCE [LARGE SCALE GENOMIC DNA]</scope>
    <source>
        <strain>SS14</strain>
    </source>
</reference>
<comment type="function">
    <text evidence="1">Binds to the 23S rRNA.</text>
</comment>
<comment type="similarity">
    <text evidence="1">Belongs to the bacterial ribosomal protein bL9 family.</text>
</comment>
<keyword id="KW-0687">Ribonucleoprotein</keyword>
<keyword id="KW-0689">Ribosomal protein</keyword>
<keyword id="KW-0694">RNA-binding</keyword>
<keyword id="KW-0699">rRNA-binding</keyword>